<sequence length="118" mass="14465">MVHLTKTLRFINNPGFRKFYYGLQGYNKYGLYYDDFYDYTDPAHLEAVRRLPPDLYDQHTYRVIRASQLEITKQFLPKEQWPSYEEDMDKGRFLTPYLDEVMKEKKEKEEWVNFLSKD</sequence>
<evidence type="ECO:0000250" key="1">
    <source>
        <dbReference type="UniProtKB" id="P00128"/>
    </source>
</evidence>
<evidence type="ECO:0000250" key="2">
    <source>
        <dbReference type="UniProtKB" id="Q871K1"/>
    </source>
</evidence>
<evidence type="ECO:0000255" key="3">
    <source>
        <dbReference type="PIRNR" id="PIRNR000022"/>
    </source>
</evidence>
<evidence type="ECO:0000269" key="4">
    <source>
    </source>
</evidence>
<evidence type="ECO:0000303" key="5">
    <source>
    </source>
</evidence>
<evidence type="ECO:0000305" key="6"/>
<evidence type="ECO:0000312" key="7">
    <source>
        <dbReference type="EMBL" id="ALA65345.1"/>
    </source>
</evidence>
<accession>A0A0K2GUJ4</accession>
<dbReference type="EMBL" id="KP893174">
    <property type="protein sequence ID" value="ALA65345.1"/>
    <property type="molecule type" value="mRNA"/>
</dbReference>
<dbReference type="RefSeq" id="XP_027196712.1">
    <property type="nucleotide sequence ID" value="XM_027340911.1"/>
</dbReference>
<dbReference type="SMR" id="A0A0K2GUJ4"/>
<dbReference type="FunCoup" id="A0A0K2GUJ4">
    <property type="interactions" value="469"/>
</dbReference>
<dbReference type="Allergome" id="11912">
    <property type="allergen name" value="Der p 24"/>
</dbReference>
<dbReference type="Allergome" id="11913">
    <property type="allergen name" value="Der p 24.0101"/>
</dbReference>
<dbReference type="EnsemblMetazoa" id="XM_027340911.1">
    <property type="protein sequence ID" value="XP_027196712.1"/>
    <property type="gene ID" value="LOC113791175"/>
</dbReference>
<dbReference type="GeneID" id="113791175"/>
<dbReference type="InParanoid" id="A0A0K2GUJ4"/>
<dbReference type="OMA" id="REEWAMK"/>
<dbReference type="OrthoDB" id="425749at2759"/>
<dbReference type="Proteomes" id="UP000515146">
    <property type="component" value="Unplaced"/>
</dbReference>
<dbReference type="GO" id="GO:0099617">
    <property type="term" value="C:matrix side of mitochondrial inner membrane"/>
    <property type="evidence" value="ECO:0000250"/>
    <property type="project" value="UniProtKB"/>
</dbReference>
<dbReference type="GO" id="GO:0045275">
    <property type="term" value="C:respiratory chain complex III"/>
    <property type="evidence" value="ECO:0000250"/>
    <property type="project" value="UniProtKB"/>
</dbReference>
<dbReference type="GO" id="GO:0006122">
    <property type="term" value="P:mitochondrial electron transport, ubiquinol to cytochrome c"/>
    <property type="evidence" value="ECO:0000250"/>
    <property type="project" value="UniProtKB"/>
</dbReference>
<dbReference type="Gene3D" id="1.10.1090.10">
    <property type="entry name" value="Cytochrome b-c1 complex subunit 7"/>
    <property type="match status" value="1"/>
</dbReference>
<dbReference type="InterPro" id="IPR003197">
    <property type="entry name" value="QCR7"/>
</dbReference>
<dbReference type="InterPro" id="IPR036544">
    <property type="entry name" value="QCR7_sf"/>
</dbReference>
<dbReference type="PANTHER" id="PTHR12022:SF0">
    <property type="entry name" value="CYTOCHROME B-C1 COMPLEX SUBUNIT 7"/>
    <property type="match status" value="1"/>
</dbReference>
<dbReference type="PANTHER" id="PTHR12022">
    <property type="entry name" value="UBIQUINOL-CYTOCHROME C REDUCTASE COMPLEX 14 KD PROTEIN"/>
    <property type="match status" value="1"/>
</dbReference>
<dbReference type="Pfam" id="PF02271">
    <property type="entry name" value="UCR_14kD"/>
    <property type="match status" value="1"/>
</dbReference>
<dbReference type="PIRSF" id="PIRSF000022">
    <property type="entry name" value="Bc1_14K"/>
    <property type="match status" value="1"/>
</dbReference>
<dbReference type="SUPFAM" id="SSF81524">
    <property type="entry name" value="14 kDa protein of cytochrome bc1 complex (Ubiquinol-cytochrome c reductase)"/>
    <property type="match status" value="1"/>
</dbReference>
<name>QCR7_DERPT</name>
<comment type="function">
    <text evidence="2">Component of the ubiquinol-cytochrome c oxidoreductase, a multisubunit transmembrane complex that is part of the mitochondrial electron transport chain which drives oxidative phosphorylation. The respiratory chain contains 3 multisubunit complexes succinate dehydrogenase (complex II, CII), ubiquinol-cytochrome c oxidoreductase (cytochrome b-c1 complex, complex III, CIII) and cytochrome c oxidase (complex IV, CIV), that cooperate to transfer electrons derived from NADH and succinate to molecular oxygen, creating an electrochemical gradient over the inner membrane that drives transmembrane transport and the ATP synthase. The cytochrome b-c1 complex catalyzes electron transfer from ubiquinol to cytochrome c, linking this redox reaction to translocation of protons across the mitochondrial inner membrane, with protons being carried across the membrane as hydrogens on the quinol. In the process called Q cycle, 2 protons are consumed from the matrix, 4 protons are released into the intermembrane space and 2 electrons are passed to cytochrome c.</text>
</comment>
<comment type="subunit">
    <text evidence="1">Component of the ubiquinol-cytochrome c oxidoreductase (cytochrome b-c1 complex, complex III, CIII), a multisubunit enzyme composed of 3 respiratory subunits cytochrome b, cytochrome c1 and Rieske protein, 2 core protein subunits, and additional low-molecular weight protein subunits. The complex exists as an obligatory dimer and forms supercomplexes (SCs) in the inner mitochondrial membrane with cytochrome c oxidase (complex IV, CIV).</text>
</comment>
<comment type="subcellular location">
    <subcellularLocation>
        <location>Mitochondrion inner membrane</location>
        <topology>Peripheral membrane protein</topology>
        <orientation evidence="1">Matrix side</orientation>
    </subcellularLocation>
</comment>
<comment type="allergen">
    <text evidence="4">Causes an allergic reaction in human. Recombinant protein binds to IgE in 100% of the 8 patients tested allergic to house dust mite (HDM). 50% of the 10 HDM-allergic patients tested have positive skin prick test (SPT) reactions to the recombinant protein.</text>
</comment>
<comment type="similarity">
    <text evidence="3">Belongs to the UQCRB/QCR7 family.</text>
</comment>
<reference key="1">
    <citation type="journal article" date="2019" name="Clin. Transl. Allergy">
        <title>Identification of immunodominant IgE binding epitopes of Der p 24, a major allergen of Dermatophagoides pteronyssinus.</title>
        <authorList>
            <person name="Cai Z.L."/>
            <person name="Chen J.J."/>
            <person name="Zhang Z."/>
            <person name="Hou Y.B."/>
            <person name="He Y.S."/>
            <person name="Sun J.L."/>
            <person name="Ji K."/>
        </authorList>
    </citation>
    <scope>NUCLEOTIDE SEQUENCE [MRNA]</scope>
    <scope>PROTEIN SEQUENCE OF 10-28 AND 79-90</scope>
    <scope>ALLERGEN</scope>
    <scope>REGION</scope>
    <scope>3D-STRUCTURE MODELING</scope>
</reference>
<proteinExistence type="evidence at protein level"/>
<feature type="chain" id="PRO_0000451110" description="Cytochrome b-c1 complex subunit 7">
    <location>
        <begin position="1"/>
        <end position="118"/>
    </location>
</feature>
<feature type="region of interest" description="IgE-binding. Immunodominant epitope; induces specific IgE antibody production in mice. Causes degranulation of rat basophilic leukemia (RBL) cells and the release of beta-hexosaminidase from them" evidence="4">
    <location>
        <begin position="1"/>
        <end position="32"/>
    </location>
</feature>
<keyword id="KW-0020">Allergen</keyword>
<keyword id="KW-0903">Direct protein sequencing</keyword>
<keyword id="KW-0249">Electron transport</keyword>
<keyword id="KW-0472">Membrane</keyword>
<keyword id="KW-0496">Mitochondrion</keyword>
<keyword id="KW-0999">Mitochondrion inner membrane</keyword>
<keyword id="KW-1185">Reference proteome</keyword>
<keyword id="KW-0679">Respiratory chain</keyword>
<keyword id="KW-0813">Transport</keyword>
<protein>
    <recommendedName>
        <fullName evidence="6">Cytochrome b-c1 complex subunit 7</fullName>
    </recommendedName>
    <alternativeName>
        <fullName evidence="5">Allergen Der p 24</fullName>
    </alternativeName>
    <alternativeName>
        <fullName evidence="6">Complex III subunit 7</fullName>
    </alternativeName>
    <alternativeName>
        <fullName evidence="6">Complex III subunit VII</fullName>
    </alternativeName>
    <alternativeName>
        <fullName evidence="5">Ubiquinol-cytochrome c reductase binding protein Der p 24</fullName>
        <shortName evidence="5">UQCRB Der p 24</shortName>
    </alternativeName>
    <alternativeName>
        <fullName evidence="6">Ubiquinol-cytochrome c reductase complex 14 kDa protein</fullName>
    </alternativeName>
    <allergenName evidence="6">Der p 24.0101</allergenName>
</protein>
<organism evidence="7">
    <name type="scientific">Dermatophagoides pteronyssinus</name>
    <name type="common">European house dust mite</name>
    <dbReference type="NCBI Taxonomy" id="6956"/>
    <lineage>
        <taxon>Eukaryota</taxon>
        <taxon>Metazoa</taxon>
        <taxon>Ecdysozoa</taxon>
        <taxon>Arthropoda</taxon>
        <taxon>Chelicerata</taxon>
        <taxon>Arachnida</taxon>
        <taxon>Acari</taxon>
        <taxon>Acariformes</taxon>
        <taxon>Sarcoptiformes</taxon>
        <taxon>Astigmata</taxon>
        <taxon>Psoroptidia</taxon>
        <taxon>Analgoidea</taxon>
        <taxon>Pyroglyphidae</taxon>
        <taxon>Dermatophagoidinae</taxon>
        <taxon>Dermatophagoides</taxon>
    </lineage>
</organism>